<organism>
    <name type="scientific">Methylobacterium sp. (strain 4-46)</name>
    <dbReference type="NCBI Taxonomy" id="426117"/>
    <lineage>
        <taxon>Bacteria</taxon>
        <taxon>Pseudomonadati</taxon>
        <taxon>Pseudomonadota</taxon>
        <taxon>Alphaproteobacteria</taxon>
        <taxon>Hyphomicrobiales</taxon>
        <taxon>Methylobacteriaceae</taxon>
        <taxon>Methylobacterium</taxon>
    </lineage>
</organism>
<feature type="chain" id="PRO_0000368588" description="ATP synthase subunit b 1">
    <location>
        <begin position="1"/>
        <end position="161"/>
    </location>
</feature>
<feature type="transmembrane region" description="Helical" evidence="1">
    <location>
        <begin position="5"/>
        <end position="25"/>
    </location>
</feature>
<comment type="function">
    <text evidence="1">F(1)F(0) ATP synthase produces ATP from ADP in the presence of a proton or sodium gradient. F-type ATPases consist of two structural domains, F(1) containing the extramembraneous catalytic core and F(0) containing the membrane proton channel, linked together by a central stalk and a peripheral stalk. During catalysis, ATP synthesis in the catalytic domain of F(1) is coupled via a rotary mechanism of the central stalk subunits to proton translocation.</text>
</comment>
<comment type="function">
    <text evidence="1">Component of the F(0) channel, it forms part of the peripheral stalk, linking F(1) to F(0).</text>
</comment>
<comment type="subunit">
    <text evidence="1">F-type ATPases have 2 components, F(1) - the catalytic core - and F(0) - the membrane proton channel. F(1) has five subunits: alpha(3), beta(3), gamma(1), delta(1), epsilon(1). F(0) has three main subunits: a(1), b(2) and c(10-14). The alpha and beta chains form an alternating ring which encloses part of the gamma chain. F(1) is attached to F(0) by a central stalk formed by the gamma and epsilon chains, while a peripheral stalk is formed by the delta and b chains.</text>
</comment>
<comment type="subcellular location">
    <subcellularLocation>
        <location evidence="1">Cell inner membrane</location>
        <topology evidence="1">Single-pass membrane protein</topology>
    </subcellularLocation>
</comment>
<comment type="similarity">
    <text evidence="1">Belongs to the ATPase B chain family.</text>
</comment>
<evidence type="ECO:0000255" key="1">
    <source>
        <dbReference type="HAMAP-Rule" id="MF_01398"/>
    </source>
</evidence>
<protein>
    <recommendedName>
        <fullName evidence="1">ATP synthase subunit b 1</fullName>
    </recommendedName>
    <alternativeName>
        <fullName evidence="1">ATP synthase F(0) sector subunit b 1</fullName>
    </alternativeName>
    <alternativeName>
        <fullName evidence="1">ATPase subunit I 1</fullName>
    </alternativeName>
    <alternativeName>
        <fullName evidence="1">F-type ATPase subunit b 1</fullName>
        <shortName evidence="1">F-ATPase subunit b 1</shortName>
    </alternativeName>
</protein>
<dbReference type="EMBL" id="CP000943">
    <property type="protein sequence ID" value="ACA21181.1"/>
    <property type="molecule type" value="Genomic_DNA"/>
</dbReference>
<dbReference type="RefSeq" id="WP_012336553.1">
    <property type="nucleotide sequence ID" value="NC_010511.1"/>
</dbReference>
<dbReference type="SMR" id="B0ULY4"/>
<dbReference type="STRING" id="426117.M446_6947"/>
<dbReference type="KEGG" id="met:M446_6947"/>
<dbReference type="eggNOG" id="COG0711">
    <property type="taxonomic scope" value="Bacteria"/>
</dbReference>
<dbReference type="HOGENOM" id="CLU_079215_6_1_5"/>
<dbReference type="GO" id="GO:0005886">
    <property type="term" value="C:plasma membrane"/>
    <property type="evidence" value="ECO:0007669"/>
    <property type="project" value="UniProtKB-SubCell"/>
</dbReference>
<dbReference type="GO" id="GO:0045259">
    <property type="term" value="C:proton-transporting ATP synthase complex"/>
    <property type="evidence" value="ECO:0007669"/>
    <property type="project" value="UniProtKB-KW"/>
</dbReference>
<dbReference type="GO" id="GO:0046933">
    <property type="term" value="F:proton-transporting ATP synthase activity, rotational mechanism"/>
    <property type="evidence" value="ECO:0007669"/>
    <property type="project" value="UniProtKB-UniRule"/>
</dbReference>
<dbReference type="GO" id="GO:0046961">
    <property type="term" value="F:proton-transporting ATPase activity, rotational mechanism"/>
    <property type="evidence" value="ECO:0007669"/>
    <property type="project" value="TreeGrafter"/>
</dbReference>
<dbReference type="CDD" id="cd06503">
    <property type="entry name" value="ATP-synt_Fo_b"/>
    <property type="match status" value="1"/>
</dbReference>
<dbReference type="HAMAP" id="MF_01398">
    <property type="entry name" value="ATP_synth_b_bprime"/>
    <property type="match status" value="1"/>
</dbReference>
<dbReference type="InterPro" id="IPR002146">
    <property type="entry name" value="ATP_synth_b/b'su_bac/chlpt"/>
</dbReference>
<dbReference type="InterPro" id="IPR050059">
    <property type="entry name" value="ATP_synthase_B_chain"/>
</dbReference>
<dbReference type="PANTHER" id="PTHR33445:SF1">
    <property type="entry name" value="ATP SYNTHASE SUBUNIT B"/>
    <property type="match status" value="1"/>
</dbReference>
<dbReference type="PANTHER" id="PTHR33445">
    <property type="entry name" value="ATP SYNTHASE SUBUNIT B', CHLOROPLASTIC"/>
    <property type="match status" value="1"/>
</dbReference>
<dbReference type="Pfam" id="PF00430">
    <property type="entry name" value="ATP-synt_B"/>
    <property type="match status" value="1"/>
</dbReference>
<sequence>MLEPEFWVAVAFVIFCGIVWKAGGFDQIINGLDRRGERVRRELEEARRLREEAAALLADYQKRRGEAEREAEAIVANARAEAERAAAEGHARLNDFVARRTKAAEAKIAQAEAQAAAEVRAAAAEAAVRVSETILREKVTGDAAQDLIRRSLGDIRTRLRA</sequence>
<reference key="1">
    <citation type="submission" date="2008-02" db="EMBL/GenBank/DDBJ databases">
        <title>Complete sequence of chromosome of Methylobacterium sp. 4-46.</title>
        <authorList>
            <consortium name="US DOE Joint Genome Institute"/>
            <person name="Copeland A."/>
            <person name="Lucas S."/>
            <person name="Lapidus A."/>
            <person name="Glavina del Rio T."/>
            <person name="Dalin E."/>
            <person name="Tice H."/>
            <person name="Bruce D."/>
            <person name="Goodwin L."/>
            <person name="Pitluck S."/>
            <person name="Chertkov O."/>
            <person name="Brettin T."/>
            <person name="Detter J.C."/>
            <person name="Han C."/>
            <person name="Kuske C.R."/>
            <person name="Schmutz J."/>
            <person name="Larimer F."/>
            <person name="Land M."/>
            <person name="Hauser L."/>
            <person name="Kyrpides N."/>
            <person name="Ivanova N."/>
            <person name="Marx C.J."/>
            <person name="Richardson P."/>
        </authorList>
    </citation>
    <scope>NUCLEOTIDE SEQUENCE [LARGE SCALE GENOMIC DNA]</scope>
    <source>
        <strain>4-46</strain>
    </source>
</reference>
<accession>B0ULY4</accession>
<keyword id="KW-0066">ATP synthesis</keyword>
<keyword id="KW-0997">Cell inner membrane</keyword>
<keyword id="KW-1003">Cell membrane</keyword>
<keyword id="KW-0138">CF(0)</keyword>
<keyword id="KW-0375">Hydrogen ion transport</keyword>
<keyword id="KW-0406">Ion transport</keyword>
<keyword id="KW-0472">Membrane</keyword>
<keyword id="KW-0812">Transmembrane</keyword>
<keyword id="KW-1133">Transmembrane helix</keyword>
<keyword id="KW-0813">Transport</keyword>
<name>ATPF1_METS4</name>
<gene>
    <name evidence="1" type="primary">atpF1</name>
    <name type="ordered locus">M446_6947</name>
</gene>
<proteinExistence type="inferred from homology"/>